<accession>C4ZVL3</accession>
<organism>
    <name type="scientific">Escherichia coli (strain K12 / MC4100 / BW2952)</name>
    <dbReference type="NCBI Taxonomy" id="595496"/>
    <lineage>
        <taxon>Bacteria</taxon>
        <taxon>Pseudomonadati</taxon>
        <taxon>Pseudomonadota</taxon>
        <taxon>Gammaproteobacteria</taxon>
        <taxon>Enterobacterales</taxon>
        <taxon>Enterobacteriaceae</taxon>
        <taxon>Escherichia</taxon>
    </lineage>
</organism>
<evidence type="ECO:0000255" key="1">
    <source>
        <dbReference type="HAMAP-Rule" id="MF_01825"/>
    </source>
</evidence>
<gene>
    <name evidence="1" type="primary">pdxB</name>
    <name type="ordered locus">BWG_2094</name>
</gene>
<reference key="1">
    <citation type="journal article" date="2009" name="J. Bacteriol.">
        <title>Genomic sequencing reveals regulatory mutations and recombinational events in the widely used MC4100 lineage of Escherichia coli K-12.</title>
        <authorList>
            <person name="Ferenci T."/>
            <person name="Zhou Z."/>
            <person name="Betteridge T."/>
            <person name="Ren Y."/>
            <person name="Liu Y."/>
            <person name="Feng L."/>
            <person name="Reeves P.R."/>
            <person name="Wang L."/>
        </authorList>
    </citation>
    <scope>NUCLEOTIDE SEQUENCE [LARGE SCALE GENOMIC DNA]</scope>
    <source>
        <strain>K12 / MC4100 / BW2952</strain>
    </source>
</reference>
<feature type="chain" id="PRO_1000216069" description="Erythronate-4-phosphate dehydrogenase">
    <location>
        <begin position="1"/>
        <end position="378"/>
    </location>
</feature>
<feature type="active site" evidence="1">
    <location>
        <position position="208"/>
    </location>
</feature>
<feature type="active site" evidence="1">
    <location>
        <position position="237"/>
    </location>
</feature>
<feature type="active site" description="Proton donor" evidence="1">
    <location>
        <position position="254"/>
    </location>
</feature>
<feature type="binding site" evidence="1">
    <location>
        <position position="45"/>
    </location>
    <ligand>
        <name>substrate</name>
    </ligand>
</feature>
<feature type="binding site" evidence="1">
    <location>
        <position position="66"/>
    </location>
    <ligand>
        <name>substrate</name>
    </ligand>
</feature>
<feature type="binding site" evidence="1">
    <location>
        <position position="146"/>
    </location>
    <ligand>
        <name>NAD(+)</name>
        <dbReference type="ChEBI" id="CHEBI:57540"/>
    </ligand>
</feature>
<feature type="binding site" evidence="1">
    <location>
        <position position="175"/>
    </location>
    <ligand>
        <name>NAD(+)</name>
        <dbReference type="ChEBI" id="CHEBI:57540"/>
    </ligand>
</feature>
<feature type="binding site" evidence="1">
    <location>
        <position position="232"/>
    </location>
    <ligand>
        <name>NAD(+)</name>
        <dbReference type="ChEBI" id="CHEBI:57540"/>
    </ligand>
</feature>
<feature type="binding site" evidence="1">
    <location>
        <position position="257"/>
    </location>
    <ligand>
        <name>NAD(+)</name>
        <dbReference type="ChEBI" id="CHEBI:57540"/>
    </ligand>
</feature>
<feature type="binding site" evidence="1">
    <location>
        <position position="258"/>
    </location>
    <ligand>
        <name>substrate</name>
    </ligand>
</feature>
<dbReference type="EC" id="1.1.1.290" evidence="1"/>
<dbReference type="EMBL" id="CP001396">
    <property type="protein sequence ID" value="ACR63040.1"/>
    <property type="molecule type" value="Genomic_DNA"/>
</dbReference>
<dbReference type="RefSeq" id="WP_000699148.1">
    <property type="nucleotide sequence ID" value="NC_012759.1"/>
</dbReference>
<dbReference type="SMR" id="C4ZVL3"/>
<dbReference type="KEGG" id="ebw:BWG_2094"/>
<dbReference type="HOGENOM" id="CLU_019796_4_0_6"/>
<dbReference type="UniPathway" id="UPA00244">
    <property type="reaction ID" value="UER00310"/>
</dbReference>
<dbReference type="GO" id="GO:0005829">
    <property type="term" value="C:cytosol"/>
    <property type="evidence" value="ECO:0007669"/>
    <property type="project" value="TreeGrafter"/>
</dbReference>
<dbReference type="GO" id="GO:0033711">
    <property type="term" value="F:4-phosphoerythronate dehydrogenase activity"/>
    <property type="evidence" value="ECO:0007669"/>
    <property type="project" value="UniProtKB-EC"/>
</dbReference>
<dbReference type="GO" id="GO:0051287">
    <property type="term" value="F:NAD binding"/>
    <property type="evidence" value="ECO:0007669"/>
    <property type="project" value="InterPro"/>
</dbReference>
<dbReference type="GO" id="GO:0046983">
    <property type="term" value="F:protein dimerization activity"/>
    <property type="evidence" value="ECO:0007669"/>
    <property type="project" value="InterPro"/>
</dbReference>
<dbReference type="GO" id="GO:0036001">
    <property type="term" value="P:'de novo' pyridoxal 5'-phosphate biosynthetic process"/>
    <property type="evidence" value="ECO:0007669"/>
    <property type="project" value="TreeGrafter"/>
</dbReference>
<dbReference type="GO" id="GO:0008615">
    <property type="term" value="P:pyridoxine biosynthetic process"/>
    <property type="evidence" value="ECO:0007669"/>
    <property type="project" value="UniProtKB-UniRule"/>
</dbReference>
<dbReference type="CDD" id="cd12158">
    <property type="entry name" value="ErythrP_dh"/>
    <property type="match status" value="1"/>
</dbReference>
<dbReference type="FunFam" id="3.30.1370.170:FF:000001">
    <property type="entry name" value="Erythronate-4-phosphate dehydrogenase"/>
    <property type="match status" value="1"/>
</dbReference>
<dbReference type="FunFam" id="3.40.50.720:FF:000093">
    <property type="entry name" value="Erythronate-4-phosphate dehydrogenase"/>
    <property type="match status" value="1"/>
</dbReference>
<dbReference type="Gene3D" id="3.30.1370.170">
    <property type="match status" value="1"/>
</dbReference>
<dbReference type="Gene3D" id="3.40.50.720">
    <property type="entry name" value="NAD(P)-binding Rossmann-like Domain"/>
    <property type="match status" value="2"/>
</dbReference>
<dbReference type="HAMAP" id="MF_01825">
    <property type="entry name" value="PdxB"/>
    <property type="match status" value="1"/>
</dbReference>
<dbReference type="InterPro" id="IPR006139">
    <property type="entry name" value="D-isomer_2_OHA_DH_cat_dom"/>
</dbReference>
<dbReference type="InterPro" id="IPR029753">
    <property type="entry name" value="D-isomer_DH_CS"/>
</dbReference>
<dbReference type="InterPro" id="IPR029752">
    <property type="entry name" value="D-isomer_DH_CS1"/>
</dbReference>
<dbReference type="InterPro" id="IPR006140">
    <property type="entry name" value="D-isomer_DH_NAD-bd"/>
</dbReference>
<dbReference type="InterPro" id="IPR020921">
    <property type="entry name" value="Erythronate-4-P_DHase"/>
</dbReference>
<dbReference type="InterPro" id="IPR024531">
    <property type="entry name" value="Erythronate-4-P_DHase_dimer"/>
</dbReference>
<dbReference type="InterPro" id="IPR036291">
    <property type="entry name" value="NAD(P)-bd_dom_sf"/>
</dbReference>
<dbReference type="InterPro" id="IPR038251">
    <property type="entry name" value="PdxB_dimer_sf"/>
</dbReference>
<dbReference type="NCBIfam" id="NF001309">
    <property type="entry name" value="PRK00257.1"/>
    <property type="match status" value="1"/>
</dbReference>
<dbReference type="NCBIfam" id="NF011966">
    <property type="entry name" value="PRK15438.1"/>
    <property type="match status" value="1"/>
</dbReference>
<dbReference type="PANTHER" id="PTHR42938">
    <property type="entry name" value="FORMATE DEHYDROGENASE 1"/>
    <property type="match status" value="1"/>
</dbReference>
<dbReference type="PANTHER" id="PTHR42938:SF9">
    <property type="entry name" value="FORMATE DEHYDROGENASE 1"/>
    <property type="match status" value="1"/>
</dbReference>
<dbReference type="Pfam" id="PF00389">
    <property type="entry name" value="2-Hacid_dh"/>
    <property type="match status" value="1"/>
</dbReference>
<dbReference type="Pfam" id="PF02826">
    <property type="entry name" value="2-Hacid_dh_C"/>
    <property type="match status" value="1"/>
</dbReference>
<dbReference type="Pfam" id="PF11890">
    <property type="entry name" value="DUF3410"/>
    <property type="match status" value="1"/>
</dbReference>
<dbReference type="SUPFAM" id="SSF52283">
    <property type="entry name" value="Formate/glycerate dehydrogenase catalytic domain-like"/>
    <property type="match status" value="1"/>
</dbReference>
<dbReference type="SUPFAM" id="SSF51735">
    <property type="entry name" value="NAD(P)-binding Rossmann-fold domains"/>
    <property type="match status" value="1"/>
</dbReference>
<dbReference type="PROSITE" id="PS00065">
    <property type="entry name" value="D_2_HYDROXYACID_DH_1"/>
    <property type="match status" value="1"/>
</dbReference>
<dbReference type="PROSITE" id="PS00671">
    <property type="entry name" value="D_2_HYDROXYACID_DH_3"/>
    <property type="match status" value="1"/>
</dbReference>
<comment type="function">
    <text evidence="1">Catalyzes the oxidation of erythronate-4-phosphate to 3-hydroxy-2-oxo-4-phosphonooxybutanoate.</text>
</comment>
<comment type="catalytic activity">
    <reaction evidence="1">
        <text>4-phospho-D-erythronate + NAD(+) = (R)-3-hydroxy-2-oxo-4-phosphooxybutanoate + NADH + H(+)</text>
        <dbReference type="Rhea" id="RHEA:18829"/>
        <dbReference type="ChEBI" id="CHEBI:15378"/>
        <dbReference type="ChEBI" id="CHEBI:57540"/>
        <dbReference type="ChEBI" id="CHEBI:57945"/>
        <dbReference type="ChEBI" id="CHEBI:58538"/>
        <dbReference type="ChEBI" id="CHEBI:58766"/>
        <dbReference type="EC" id="1.1.1.290"/>
    </reaction>
</comment>
<comment type="pathway">
    <text evidence="1">Cofactor biosynthesis; pyridoxine 5'-phosphate biosynthesis; pyridoxine 5'-phosphate from D-erythrose 4-phosphate: step 2/5.</text>
</comment>
<comment type="subunit">
    <text evidence="1">Homodimer.</text>
</comment>
<comment type="subcellular location">
    <subcellularLocation>
        <location evidence="1">Cytoplasm</location>
    </subcellularLocation>
</comment>
<comment type="similarity">
    <text evidence="1">Belongs to the D-isomer specific 2-hydroxyacid dehydrogenase family. PdxB subfamily.</text>
</comment>
<name>PDXB_ECOBW</name>
<sequence>MKILVDENMPYARDLFSRLGEVTAVPGRPIPVAQLADADALMVRSVTKVNESLLAGKPIKFVGTATAGTDHVDEAWLKQAGIGFSAAPGCNAIAVVEYVFSSLLMLAERDGFSLYDRTVGIVGVGNVGRRLQARLEALGIKTLLCDPPRADRGDEGDFRSLDELVQRADILTFHTPLFKDGPYKTLHLADEKLIRSLKPGAILINACRGAVVDNTALLTCLNEGQKLSVVLDVWEGEPELNVELLKKVDIGTSHIAGYTLEGKARGTTQVFEAYSKFIGHEQHVALDTLLPAPEFGRITLHGPLDQPTLKRLVHLVYDVRRDDAPLRKVAGIPGEFDKLRKNYLERREWSSLYVICDDASAASLLCKLGFNAVHHPAR</sequence>
<proteinExistence type="inferred from homology"/>
<keyword id="KW-0963">Cytoplasm</keyword>
<keyword id="KW-0520">NAD</keyword>
<keyword id="KW-0560">Oxidoreductase</keyword>
<keyword id="KW-0664">Pyridoxine biosynthesis</keyword>
<protein>
    <recommendedName>
        <fullName evidence="1">Erythronate-4-phosphate dehydrogenase</fullName>
        <ecNumber evidence="1">1.1.1.290</ecNumber>
    </recommendedName>
</protein>